<accession>O70023</accession>
<accession>Q7B309</accession>
<accession>Q9ZHQ5</accession>
<reference key="1">
    <citation type="journal article" date="1998" name="Gene">
        <title>Characterization and targeted disruption of a glycosyltransferase gene in the tylosin producer, Streptomyces fradiae.</title>
        <authorList>
            <person name="Wilson V.T."/>
            <person name="Cundliffe E."/>
        </authorList>
    </citation>
    <scope>NUCLEOTIDE SEQUENCE [GENOMIC DNA]</scope>
    <scope>FUNCTION</scope>
    <scope>CATALYTIC ACTIVITY</scope>
    <scope>DISRUPTION PHENOTYPE</scope>
    <source>
        <strain>T59235</strain>
    </source>
</reference>
<reference key="2">
    <citation type="journal article" date="1999" name="J. Antibiot.">
        <title>Molecular analysis of tlrB, an antibiotic-resistance gene from tylosin-producing Streptomyces fradiae, and discovery of a novel resistance mechanism.</title>
        <authorList>
            <person name="Wilson V.T."/>
            <person name="Cundliffe E."/>
        </authorList>
    </citation>
    <scope>NUCLEOTIDE SEQUENCE [GENOMIC DNA]</scope>
    <source>
        <strain>T59235</strain>
    </source>
</reference>
<reference key="3">
    <citation type="journal article" date="1999" name="Microbiology">
        <title>The tylosin biosynthetic cluster from Streptomyces fradiae: genetic organization of the left region.</title>
        <authorList>
            <person name="Fouces R."/>
            <person name="Mellado E."/>
            <person name="Diez B."/>
            <person name="Barredo J.L."/>
        </authorList>
    </citation>
    <scope>NUCLEOTIDE SEQUENCE [GENOMIC DNA]</scope>
</reference>
<keyword id="KW-0045">Antibiotic biosynthesis</keyword>
<keyword id="KW-0328">Glycosyltransferase</keyword>
<keyword id="KW-0808">Transferase</keyword>
<organism>
    <name type="scientific">Streptomyces fradiae</name>
    <name type="common">Streptomyces roseoflavus</name>
    <dbReference type="NCBI Taxonomy" id="1906"/>
    <lineage>
        <taxon>Bacteria</taxon>
        <taxon>Bacillati</taxon>
        <taxon>Actinomycetota</taxon>
        <taxon>Actinomycetes</taxon>
        <taxon>Kitasatosporales</taxon>
        <taxon>Streptomycetaceae</taxon>
        <taxon>Streptomyces</taxon>
    </lineage>
</organism>
<gene>
    <name evidence="2" type="primary">tylN</name>
</gene>
<dbReference type="EC" id="2.4.1.317" evidence="1"/>
<dbReference type="EMBL" id="AJ005397">
    <property type="protein sequence ID" value="CAA06512.2"/>
    <property type="molecule type" value="Genomic_DNA"/>
</dbReference>
<dbReference type="EMBL" id="AJ009971">
    <property type="protein sequence ID" value="CAB37346.2"/>
    <property type="molecule type" value="Genomic_DNA"/>
</dbReference>
<dbReference type="EMBL" id="AF055922">
    <property type="protein sequence ID" value="AAD12163.1"/>
    <property type="molecule type" value="Genomic_DNA"/>
</dbReference>
<dbReference type="RefSeq" id="WP_043470782.1">
    <property type="nucleotide sequence ID" value="NZ_LGSP01000084.1"/>
</dbReference>
<dbReference type="SMR" id="O70023"/>
<dbReference type="STRING" id="1906.SFRA_26475"/>
<dbReference type="CAZy" id="GT1">
    <property type="family name" value="Glycosyltransferase Family 1"/>
</dbReference>
<dbReference type="KEGG" id="ag:CAA06512"/>
<dbReference type="PATRIC" id="fig|1906.11.peg.6042"/>
<dbReference type="eggNOG" id="COG1819">
    <property type="taxonomic scope" value="Bacteria"/>
</dbReference>
<dbReference type="BioCyc" id="MetaCyc:MONOMER-18390"/>
<dbReference type="BRENDA" id="2.4.1.317">
    <property type="organism ID" value="5932"/>
</dbReference>
<dbReference type="GO" id="GO:0016758">
    <property type="term" value="F:hexosyltransferase activity"/>
    <property type="evidence" value="ECO:0007669"/>
    <property type="project" value="InterPro"/>
</dbReference>
<dbReference type="GO" id="GO:0008194">
    <property type="term" value="F:UDP-glycosyltransferase activity"/>
    <property type="evidence" value="ECO:0007669"/>
    <property type="project" value="InterPro"/>
</dbReference>
<dbReference type="GO" id="GO:0005975">
    <property type="term" value="P:carbohydrate metabolic process"/>
    <property type="evidence" value="ECO:0007669"/>
    <property type="project" value="InterPro"/>
</dbReference>
<dbReference type="GO" id="GO:0030259">
    <property type="term" value="P:lipid glycosylation"/>
    <property type="evidence" value="ECO:0007669"/>
    <property type="project" value="InterPro"/>
</dbReference>
<dbReference type="GO" id="GO:0033072">
    <property type="term" value="P:vancomycin biosynthetic process"/>
    <property type="evidence" value="ECO:0007669"/>
    <property type="project" value="UniProtKB-ARBA"/>
</dbReference>
<dbReference type="CDD" id="cd03784">
    <property type="entry name" value="GT1_Gtf-like"/>
    <property type="match status" value="1"/>
</dbReference>
<dbReference type="FunFam" id="3.40.50.2000:FF:000009">
    <property type="entry name" value="Sterol 3-beta-glucosyltransferase UGT80A2"/>
    <property type="match status" value="1"/>
</dbReference>
<dbReference type="Gene3D" id="3.40.50.2000">
    <property type="entry name" value="Glycogen Phosphorylase B"/>
    <property type="match status" value="2"/>
</dbReference>
<dbReference type="InterPro" id="IPR010610">
    <property type="entry name" value="EryCIII-like_C"/>
</dbReference>
<dbReference type="InterPro" id="IPR050426">
    <property type="entry name" value="Glycosyltransferase_28"/>
</dbReference>
<dbReference type="InterPro" id="IPR004276">
    <property type="entry name" value="GlycoTrans_28_N"/>
</dbReference>
<dbReference type="InterPro" id="IPR002213">
    <property type="entry name" value="UDP_glucos_trans"/>
</dbReference>
<dbReference type="PANTHER" id="PTHR48050">
    <property type="entry name" value="STEROL 3-BETA-GLUCOSYLTRANSFERASE"/>
    <property type="match status" value="1"/>
</dbReference>
<dbReference type="PANTHER" id="PTHR48050:SF13">
    <property type="entry name" value="STEROL 3-BETA-GLUCOSYLTRANSFERASE UGT80A2"/>
    <property type="match status" value="1"/>
</dbReference>
<dbReference type="Pfam" id="PF06722">
    <property type="entry name" value="EryCIII-like_C"/>
    <property type="match status" value="1"/>
</dbReference>
<dbReference type="Pfam" id="PF03033">
    <property type="entry name" value="Glyco_transf_28"/>
    <property type="match status" value="1"/>
</dbReference>
<dbReference type="SUPFAM" id="SSF53756">
    <property type="entry name" value="UDP-Glycosyltransferase/glycogen phosphorylase"/>
    <property type="match status" value="1"/>
</dbReference>
<protein>
    <recommendedName>
        <fullName evidence="2">O-mycaminosyltylonolide 6-deoxyallosyltransferase</fullName>
        <ecNumber evidence="1">2.4.1.317</ecNumber>
    </recommendedName>
</protein>
<comment type="function">
    <text evidence="1">Involved in the biosynthesis of the macrolide antibiotic tylosin derived from the polyketide lactone tylactone. Catalyzes the transfer of 6-deoxy-alpha-D-allose from dTDP-6-deoxy-alpha-D-allose to O-mycaminosyltylonolide (OMT) to yield demethyllactenocin.</text>
</comment>
<comment type="catalytic activity">
    <reaction evidence="1">
        <text>5-O-beta-D-mycaminosyltylonolide + dTDP-6-deoxy-alpha-D-allose = demethyllactenocin + dTDP + H(+)</text>
        <dbReference type="Rhea" id="RHEA:15357"/>
        <dbReference type="ChEBI" id="CHEBI:15378"/>
        <dbReference type="ChEBI" id="CHEBI:58369"/>
        <dbReference type="ChEBI" id="CHEBI:74143"/>
        <dbReference type="ChEBI" id="CHEBI:76804"/>
        <dbReference type="ChEBI" id="CHEBI:76810"/>
        <dbReference type="EC" id="2.4.1.317"/>
    </reaction>
</comment>
<comment type="disruption phenotype">
    <text evidence="1">Cells lacking this gene produce demycinosyl-tylosin.</text>
</comment>
<comment type="similarity">
    <text evidence="3">Belongs to the glycosyltransferase 28 family.</text>
</comment>
<evidence type="ECO:0000269" key="1">
    <source>
    </source>
</evidence>
<evidence type="ECO:0000303" key="2">
    <source>
    </source>
</evidence>
<evidence type="ECO:0000305" key="3"/>
<proteinExistence type="evidence at protein level"/>
<name>TYLN_STRFR</name>
<sequence length="422" mass="46635">MRIALLTMGSRGDVQPFVALGTGLRARGHEVVLGAPEALRPLVEQAGLEYRATPGDPDGFFTMPEVVETLRRGPAMRDLMKALPPAPEEYDQEVLDRIERAGEGVDLVVHAPLTVTTALGEPSTPWLSVNWWPNTSTWTFPAVESGQRRMGPLTPLYNRLTHWRAEREDWGWRRAEVNEFRGRRGLPPFGKSSPLRRLGHPRPHLYPFSPSVLPKPRDWPGQCHVTGYWFWDQPGWRPSPELEDFLADGEPPVLLTLGSTWPVHRQEEMVEYAVAAARGARRRLLLVGGPEGALPGDALRVPSADYSWLMPRTAAVVHHGGFGTTADAVRAGVPQVLVPVFADHPFWAARLRRMGTAARPVPLARMNREALAASVRTAVTDPAMAVRARRLGEAVAAERGVENACVLIEEWAETRTTAHTPG</sequence>
<feature type="chain" id="PRO_0000430760" description="O-mycaminosyltylonolide 6-deoxyallosyltransferase">
    <location>
        <begin position="1"/>
        <end position="422"/>
    </location>
</feature>